<gene>
    <name type="ordered locus">KLLA0B14839g</name>
</gene>
<organism>
    <name type="scientific">Kluyveromyces lactis (strain ATCC 8585 / CBS 2359 / DSM 70799 / NBRC 1267 / NRRL Y-1140 / WM37)</name>
    <name type="common">Yeast</name>
    <name type="synonym">Candida sphaerica</name>
    <dbReference type="NCBI Taxonomy" id="284590"/>
    <lineage>
        <taxon>Eukaryota</taxon>
        <taxon>Fungi</taxon>
        <taxon>Dikarya</taxon>
        <taxon>Ascomycota</taxon>
        <taxon>Saccharomycotina</taxon>
        <taxon>Saccharomycetes</taxon>
        <taxon>Saccharomycetales</taxon>
        <taxon>Saccharomycetaceae</taxon>
        <taxon>Kluyveromyces</taxon>
    </lineage>
</organism>
<reference key="1">
    <citation type="journal article" date="1988" name="J. Biol. Chem.">
        <title>Primary structure of the lactose permease gene from the yeast Kluyveromyces lactis. Presence of an unusual transcript structure.</title>
        <authorList>
            <person name="Chang Y.-D."/>
            <person name="Dickson R.C."/>
        </authorList>
    </citation>
    <scope>NUCLEOTIDE SEQUENCE [GENOMIC DNA]</scope>
    <source>
        <strain>ATCC 8585 / CBS 2359 / DSM 70799 / NBRC 1267 / NRRL Y-1140 / WM37</strain>
    </source>
</reference>
<reference key="2">
    <citation type="journal article" date="2004" name="Nature">
        <title>Genome evolution in yeasts.</title>
        <authorList>
            <person name="Dujon B."/>
            <person name="Sherman D."/>
            <person name="Fischer G."/>
            <person name="Durrens P."/>
            <person name="Casaregola S."/>
            <person name="Lafontaine I."/>
            <person name="de Montigny J."/>
            <person name="Marck C."/>
            <person name="Neuveglise C."/>
            <person name="Talla E."/>
            <person name="Goffard N."/>
            <person name="Frangeul L."/>
            <person name="Aigle M."/>
            <person name="Anthouard V."/>
            <person name="Babour A."/>
            <person name="Barbe V."/>
            <person name="Barnay S."/>
            <person name="Blanchin S."/>
            <person name="Beckerich J.-M."/>
            <person name="Beyne E."/>
            <person name="Bleykasten C."/>
            <person name="Boisrame A."/>
            <person name="Boyer J."/>
            <person name="Cattolico L."/>
            <person name="Confanioleri F."/>
            <person name="de Daruvar A."/>
            <person name="Despons L."/>
            <person name="Fabre E."/>
            <person name="Fairhead C."/>
            <person name="Ferry-Dumazet H."/>
            <person name="Groppi A."/>
            <person name="Hantraye F."/>
            <person name="Hennequin C."/>
            <person name="Jauniaux N."/>
            <person name="Joyet P."/>
            <person name="Kachouri R."/>
            <person name="Kerrest A."/>
            <person name="Koszul R."/>
            <person name="Lemaire M."/>
            <person name="Lesur I."/>
            <person name="Ma L."/>
            <person name="Muller H."/>
            <person name="Nicaud J.-M."/>
            <person name="Nikolski M."/>
            <person name="Oztas S."/>
            <person name="Ozier-Kalogeropoulos O."/>
            <person name="Pellenz S."/>
            <person name="Potier S."/>
            <person name="Richard G.-F."/>
            <person name="Straub M.-L."/>
            <person name="Suleau A."/>
            <person name="Swennen D."/>
            <person name="Tekaia F."/>
            <person name="Wesolowski-Louvel M."/>
            <person name="Westhof E."/>
            <person name="Wirth B."/>
            <person name="Zeniou-Meyer M."/>
            <person name="Zivanovic Y."/>
            <person name="Bolotin-Fukuhara M."/>
            <person name="Thierry A."/>
            <person name="Bouchier C."/>
            <person name="Caudron B."/>
            <person name="Scarpelli C."/>
            <person name="Gaillardin C."/>
            <person name="Weissenbach J."/>
            <person name="Wincker P."/>
            <person name="Souciet J.-L."/>
        </authorList>
    </citation>
    <scope>NUCLEOTIDE SEQUENCE [LARGE SCALE GENOMIC DNA]</scope>
    <source>
        <strain>ATCC 8585 / CBS 2359 / DSM 70799 / NBRC 1267 / NRRL Y-1140 / WM37</strain>
    </source>
</reference>
<proteinExistence type="predicted"/>
<comment type="catalytic activity">
    <reaction>
        <text>a phosphate monoester + H2O = an alcohol + phosphate</text>
        <dbReference type="Rhea" id="RHEA:15017"/>
        <dbReference type="ChEBI" id="CHEBI:15377"/>
        <dbReference type="ChEBI" id="CHEBI:30879"/>
        <dbReference type="ChEBI" id="CHEBI:43474"/>
        <dbReference type="ChEBI" id="CHEBI:67140"/>
        <dbReference type="EC" id="3.1.3.2"/>
    </reaction>
</comment>
<comment type="sequence caution" evidence="2">
    <conflict type="erroneous initiation">
        <sequence resource="EMBL-CDS" id="CAA30054"/>
    </conflict>
</comment>
<feature type="chain" id="PRO_0000114473" description="Probable acid phosphatase">
    <location>
        <begin position="1"/>
        <end position="421"/>
    </location>
</feature>
<feature type="active site" description="Proton donor" evidence="1">
    <location>
        <position position="229"/>
    </location>
</feature>
<keyword id="KW-0378">Hydrolase</keyword>
<keyword id="KW-1185">Reference proteome</keyword>
<dbReference type="EC" id="3.1.3.2"/>
<dbReference type="EMBL" id="X06997">
    <property type="protein sequence ID" value="CAA30054.1"/>
    <property type="status" value="ALT_INIT"/>
    <property type="molecule type" value="Genomic_DNA"/>
</dbReference>
<dbReference type="EMBL" id="CR382122">
    <property type="protein sequence ID" value="CAH02585.1"/>
    <property type="molecule type" value="Genomic_DNA"/>
</dbReference>
<dbReference type="PIR" id="B31776">
    <property type="entry name" value="B31776"/>
</dbReference>
<dbReference type="RefSeq" id="XP_452192.1">
    <property type="nucleotide sequence ID" value="XM_452192.1"/>
</dbReference>
<dbReference type="SMR" id="P08540"/>
<dbReference type="STRING" id="284590.P08540"/>
<dbReference type="PaxDb" id="284590-P08540"/>
<dbReference type="KEGG" id="kla:KLLA0_B14839g"/>
<dbReference type="eggNOG" id="ENOG502QSRP">
    <property type="taxonomic scope" value="Eukaryota"/>
</dbReference>
<dbReference type="HOGENOM" id="CLU_027977_2_0_1"/>
<dbReference type="InParanoid" id="P08540"/>
<dbReference type="OMA" id="EHIPYAG"/>
<dbReference type="Proteomes" id="UP000000598">
    <property type="component" value="Chromosome B"/>
</dbReference>
<dbReference type="GO" id="GO:0003993">
    <property type="term" value="F:acid phosphatase activity"/>
    <property type="evidence" value="ECO:0007669"/>
    <property type="project" value="UniProtKB-EC"/>
</dbReference>
<dbReference type="GO" id="GO:0009395">
    <property type="term" value="P:phospholipid catabolic process"/>
    <property type="evidence" value="ECO:0007669"/>
    <property type="project" value="TreeGrafter"/>
</dbReference>
<dbReference type="FunFam" id="3.40.720.10:FF:000043">
    <property type="entry name" value="Acid phosphatase PHOa"/>
    <property type="match status" value="1"/>
</dbReference>
<dbReference type="Gene3D" id="3.40.720.10">
    <property type="entry name" value="Alkaline Phosphatase, subunit A"/>
    <property type="match status" value="1"/>
</dbReference>
<dbReference type="InterPro" id="IPR017850">
    <property type="entry name" value="Alkaline_phosphatase_core_sf"/>
</dbReference>
<dbReference type="InterPro" id="IPR007312">
    <property type="entry name" value="Phosphoesterase"/>
</dbReference>
<dbReference type="PANTHER" id="PTHR31956:SF8">
    <property type="entry name" value="ACID PHOSPHATASE PHOA (AFU_ORTHOLOGUE AFUA_1G03570)"/>
    <property type="match status" value="1"/>
</dbReference>
<dbReference type="PANTHER" id="PTHR31956">
    <property type="entry name" value="NON-SPECIFIC PHOSPHOLIPASE C4-RELATED"/>
    <property type="match status" value="1"/>
</dbReference>
<dbReference type="Pfam" id="PF04185">
    <property type="entry name" value="Phosphoesterase"/>
    <property type="match status" value="1"/>
</dbReference>
<accession>P08540</accession>
<name>PHOX_KLULA</name>
<protein>
    <recommendedName>
        <fullName>Probable acid phosphatase</fullName>
        <ecNumber>3.1.3.2</ecNumber>
    </recommendedName>
</protein>
<evidence type="ECO:0000250" key="1"/>
<evidence type="ECO:0000305" key="2"/>
<sequence>MKFSDFSVLGLGALALNAVTVSANTADTALLRTYSTISPSLSEIESAASATEVAEVVSDVEGAAFKRFFIIFLENTDYDKAAGDESLSWLAEQGITLTNYWALTHPSEPNYLASVGGDYFALDDDRFISMPSNVSNIVDLLDTKGISWAEYQEHSPYAGFQGMNFSNQETYASDYVRKHNPLILFDNVVNNDTRLANIKNFEDFNNDVENEKLPQYAFITPNMTNDGHDTTIQFAGKWSKDFLAPLLENDYFMEDTLVLLTFDENETYGIKNKVFSILLGGVIPDELKGTKDDTFYDHYSQLASVEANWDLPHLGRHDGDANVLEIVANATNITNVEVDTTYMINETYIGYLNDYNIELPAPNVTAINRNGQPILDSIKETWEDEYSKQVSESYYTSTTTTVSADVTDAETFSNFYRYRQC</sequence>